<evidence type="ECO:0000255" key="1">
    <source>
        <dbReference type="HAMAP-Rule" id="MF_00049"/>
    </source>
</evidence>
<proteinExistence type="inferred from homology"/>
<sequence length="969" mass="107595">MTESPTAGPGGVPRADDADSDVPRYRYTAELAARLERTWQENWARLGTFNVPNPVGSLAPPDGAAVPDDKLFVQDMFPYPSGEGLHVGHPLGYIATDVYARYFRMVGRNVLHALGFDAFGLPAEQYAVQTGTHPRTRTEANVVNFRRQLGRLGFGHDSRRSFSTTDVDFYRWTQWIFLQIYNAWFDTTANKARPISELVAEFESGARCLDGGRDWAKLTAGERADVIDEYRLVYRADSLVNWCPGLGTVLANEEVTADGRSDRGNFPVFRKRLRQWMMRITAYADRLLDDLDVLDWPEQVKTMQRNWIGRSTGAVALFSARAASDDGFEVDIEVFTTRPDTLFGATYLVLAPEHDLVDELVAASWPAGVNPLWTYGGGTPGEAIAAYRRAIAAKSDLERQESREKTGVFLGSYAINPANGEPVPIFIADYVLAGYGTGAIMAVPGHDQRDWDFARAFGLPIVEVIAGGNISESAYTGDGILVNSDYLNGMSVPAAKRAIVDRLESAGRGRARIEFKLRDWLFARQRYWGEPFPIVYDSDGRPHALDEAALPVELPDVPDYSPVLFDPDDADSEPSPPLAKATEWVHVDLDLGDGLKPYSRDTNVMPQWAGSSWYELRYTDPHNSERFCAKENEAYWMGPRPAEHGPDDPGGVDLYVGGAEHAVLHLLYSRFWHKVLYDLGHVSSREPYRRLVNQGYIQAYAYTDARGSYVPAEQVIERGDRFVYPGPDGEVEVFQEFGKIGKSLKNSVSPDEICDAYGADTLRVYEMSMGPLEASRPWATKDVVGAYRFLQRVWRLVVDEHTGETRVADGVELDIDTLRALHRTIVGVSEDFAALRNNTATAKLIEYTNHLTKKHRDAVPRAAVEPLVQMLAPLAPHIAEELWLRLGNTTSLAHGPFPKADAAYLVDETVEYPVQVNGKVRGRVVVAADTDEETLKAAVLTDEKVQAFLAGATPRKVIVVAGRLVNLVI</sequence>
<organism>
    <name type="scientific">Mycobacterium bovis (strain BCG / Tokyo 172 / ATCC 35737 / TMC 1019)</name>
    <dbReference type="NCBI Taxonomy" id="561275"/>
    <lineage>
        <taxon>Bacteria</taxon>
        <taxon>Bacillati</taxon>
        <taxon>Actinomycetota</taxon>
        <taxon>Actinomycetes</taxon>
        <taxon>Mycobacteriales</taxon>
        <taxon>Mycobacteriaceae</taxon>
        <taxon>Mycobacterium</taxon>
        <taxon>Mycobacterium tuberculosis complex</taxon>
    </lineage>
</organism>
<reference key="1">
    <citation type="journal article" date="2009" name="Vaccine">
        <title>Whole genome sequence analysis of Mycobacterium bovis bacillus Calmette-Guerin (BCG) Tokyo 172: a comparative study of BCG vaccine substrains.</title>
        <authorList>
            <person name="Seki M."/>
            <person name="Honda I."/>
            <person name="Fujita I."/>
            <person name="Yano I."/>
            <person name="Yamamoto S."/>
            <person name="Koyama A."/>
        </authorList>
    </citation>
    <scope>NUCLEOTIDE SEQUENCE [LARGE SCALE GENOMIC DNA]</scope>
    <source>
        <strain>BCG / Tokyo 172 / ATCC 35737 / TMC 1019</strain>
    </source>
</reference>
<comment type="catalytic activity">
    <reaction evidence="1">
        <text>tRNA(Leu) + L-leucine + ATP = L-leucyl-tRNA(Leu) + AMP + diphosphate</text>
        <dbReference type="Rhea" id="RHEA:11688"/>
        <dbReference type="Rhea" id="RHEA-COMP:9613"/>
        <dbReference type="Rhea" id="RHEA-COMP:9622"/>
        <dbReference type="ChEBI" id="CHEBI:30616"/>
        <dbReference type="ChEBI" id="CHEBI:33019"/>
        <dbReference type="ChEBI" id="CHEBI:57427"/>
        <dbReference type="ChEBI" id="CHEBI:78442"/>
        <dbReference type="ChEBI" id="CHEBI:78494"/>
        <dbReference type="ChEBI" id="CHEBI:456215"/>
        <dbReference type="EC" id="6.1.1.4"/>
    </reaction>
</comment>
<comment type="subcellular location">
    <subcellularLocation>
        <location evidence="1">Cytoplasm</location>
    </subcellularLocation>
</comment>
<comment type="similarity">
    <text evidence="1">Belongs to the class-I aminoacyl-tRNA synthetase family.</text>
</comment>
<dbReference type="EC" id="6.1.1.4" evidence="1"/>
<dbReference type="EMBL" id="AP010918">
    <property type="protein sequence ID" value="BAH24343.1"/>
    <property type="molecule type" value="Genomic_DNA"/>
</dbReference>
<dbReference type="RefSeq" id="WP_003900794.1">
    <property type="nucleotide sequence ID" value="NZ_CP014566.1"/>
</dbReference>
<dbReference type="SMR" id="C1AJ38"/>
<dbReference type="GeneID" id="45424000"/>
<dbReference type="KEGG" id="mbt:JTY_0042"/>
<dbReference type="HOGENOM" id="CLU_004427_0_0_11"/>
<dbReference type="GO" id="GO:0005829">
    <property type="term" value="C:cytosol"/>
    <property type="evidence" value="ECO:0007669"/>
    <property type="project" value="TreeGrafter"/>
</dbReference>
<dbReference type="GO" id="GO:0002161">
    <property type="term" value="F:aminoacyl-tRNA deacylase activity"/>
    <property type="evidence" value="ECO:0007669"/>
    <property type="project" value="InterPro"/>
</dbReference>
<dbReference type="GO" id="GO:0005524">
    <property type="term" value="F:ATP binding"/>
    <property type="evidence" value="ECO:0007669"/>
    <property type="project" value="UniProtKB-UniRule"/>
</dbReference>
<dbReference type="GO" id="GO:0004823">
    <property type="term" value="F:leucine-tRNA ligase activity"/>
    <property type="evidence" value="ECO:0007669"/>
    <property type="project" value="UniProtKB-UniRule"/>
</dbReference>
<dbReference type="GO" id="GO:0006429">
    <property type="term" value="P:leucyl-tRNA aminoacylation"/>
    <property type="evidence" value="ECO:0007669"/>
    <property type="project" value="UniProtKB-UniRule"/>
</dbReference>
<dbReference type="CDD" id="cd07958">
    <property type="entry name" value="Anticodon_Ia_Leu_BEm"/>
    <property type="match status" value="1"/>
</dbReference>
<dbReference type="FunFam" id="3.40.50.620:FF:000060">
    <property type="entry name" value="Leucine--tRNA ligase"/>
    <property type="match status" value="1"/>
</dbReference>
<dbReference type="FunFam" id="3.40.50.620:FF:000087">
    <property type="entry name" value="Leucine--tRNA ligase"/>
    <property type="match status" value="1"/>
</dbReference>
<dbReference type="FunFam" id="3.40.50.620:FF:000239">
    <property type="entry name" value="Leucine--tRNA ligase"/>
    <property type="match status" value="1"/>
</dbReference>
<dbReference type="FunFam" id="3.90.740.10:FF:000017">
    <property type="entry name" value="Leucine--tRNA ligase"/>
    <property type="match status" value="1"/>
</dbReference>
<dbReference type="FunFam" id="1.10.730.10:FF:000011">
    <property type="entry name" value="Leucine--tRNA ligase chloroplastic/mitochondrial"/>
    <property type="match status" value="1"/>
</dbReference>
<dbReference type="Gene3D" id="3.40.50.620">
    <property type="entry name" value="HUPs"/>
    <property type="match status" value="3"/>
</dbReference>
<dbReference type="Gene3D" id="1.10.730.10">
    <property type="entry name" value="Isoleucyl-tRNA Synthetase, Domain 1"/>
    <property type="match status" value="1"/>
</dbReference>
<dbReference type="Gene3D" id="3.90.740.10">
    <property type="entry name" value="Valyl/Leucyl/Isoleucyl-tRNA synthetase, editing domain"/>
    <property type="match status" value="1"/>
</dbReference>
<dbReference type="HAMAP" id="MF_00049_B">
    <property type="entry name" value="Leu_tRNA_synth_B"/>
    <property type="match status" value="1"/>
</dbReference>
<dbReference type="InterPro" id="IPR001412">
    <property type="entry name" value="aa-tRNA-synth_I_CS"/>
</dbReference>
<dbReference type="InterPro" id="IPR002302">
    <property type="entry name" value="Leu-tRNA-ligase"/>
</dbReference>
<dbReference type="InterPro" id="IPR025709">
    <property type="entry name" value="Leu_tRNA-synth_edit"/>
</dbReference>
<dbReference type="InterPro" id="IPR013155">
    <property type="entry name" value="M/V/L/I-tRNA-synth_anticd-bd"/>
</dbReference>
<dbReference type="InterPro" id="IPR015413">
    <property type="entry name" value="Methionyl/Leucyl_tRNA_Synth"/>
</dbReference>
<dbReference type="InterPro" id="IPR014729">
    <property type="entry name" value="Rossmann-like_a/b/a_fold"/>
</dbReference>
<dbReference type="InterPro" id="IPR009080">
    <property type="entry name" value="tRNAsynth_Ia_anticodon-bd"/>
</dbReference>
<dbReference type="InterPro" id="IPR009008">
    <property type="entry name" value="Val/Leu/Ile-tRNA-synth_edit"/>
</dbReference>
<dbReference type="NCBIfam" id="TIGR00396">
    <property type="entry name" value="leuS_bact"/>
    <property type="match status" value="1"/>
</dbReference>
<dbReference type="PANTHER" id="PTHR43740:SF2">
    <property type="entry name" value="LEUCINE--TRNA LIGASE, MITOCHONDRIAL"/>
    <property type="match status" value="1"/>
</dbReference>
<dbReference type="PANTHER" id="PTHR43740">
    <property type="entry name" value="LEUCYL-TRNA SYNTHETASE"/>
    <property type="match status" value="1"/>
</dbReference>
<dbReference type="Pfam" id="PF08264">
    <property type="entry name" value="Anticodon_1"/>
    <property type="match status" value="1"/>
</dbReference>
<dbReference type="Pfam" id="PF13603">
    <property type="entry name" value="tRNA-synt_1_2"/>
    <property type="match status" value="1"/>
</dbReference>
<dbReference type="Pfam" id="PF09334">
    <property type="entry name" value="tRNA-synt_1g"/>
    <property type="match status" value="1"/>
</dbReference>
<dbReference type="PRINTS" id="PR00985">
    <property type="entry name" value="TRNASYNTHLEU"/>
</dbReference>
<dbReference type="SUPFAM" id="SSF47323">
    <property type="entry name" value="Anticodon-binding domain of a subclass of class I aminoacyl-tRNA synthetases"/>
    <property type="match status" value="1"/>
</dbReference>
<dbReference type="SUPFAM" id="SSF52374">
    <property type="entry name" value="Nucleotidylyl transferase"/>
    <property type="match status" value="1"/>
</dbReference>
<dbReference type="SUPFAM" id="SSF50677">
    <property type="entry name" value="ValRS/IleRS/LeuRS editing domain"/>
    <property type="match status" value="1"/>
</dbReference>
<dbReference type="PROSITE" id="PS00178">
    <property type="entry name" value="AA_TRNA_LIGASE_I"/>
    <property type="match status" value="1"/>
</dbReference>
<name>SYL_MYCBT</name>
<accession>C1AJ38</accession>
<feature type="chain" id="PRO_1000199215" description="Leucine--tRNA ligase">
    <location>
        <begin position="1"/>
        <end position="969"/>
    </location>
</feature>
<feature type="short sequence motif" description="'HIGH' region">
    <location>
        <begin position="78"/>
        <end position="89"/>
    </location>
</feature>
<feature type="short sequence motif" description="'KMSKS' region">
    <location>
        <begin position="739"/>
        <end position="743"/>
    </location>
</feature>
<feature type="binding site" evidence="1">
    <location>
        <position position="742"/>
    </location>
    <ligand>
        <name>ATP</name>
        <dbReference type="ChEBI" id="CHEBI:30616"/>
    </ligand>
</feature>
<keyword id="KW-0030">Aminoacyl-tRNA synthetase</keyword>
<keyword id="KW-0067">ATP-binding</keyword>
<keyword id="KW-0963">Cytoplasm</keyword>
<keyword id="KW-0436">Ligase</keyword>
<keyword id="KW-0547">Nucleotide-binding</keyword>
<keyword id="KW-0648">Protein biosynthesis</keyword>
<protein>
    <recommendedName>
        <fullName evidence="1">Leucine--tRNA ligase</fullName>
        <ecNumber evidence="1">6.1.1.4</ecNumber>
    </recommendedName>
    <alternativeName>
        <fullName evidence="1">Leucyl-tRNA synthetase</fullName>
        <shortName evidence="1">LeuRS</shortName>
    </alternativeName>
</protein>
<gene>
    <name evidence="1" type="primary">leuS</name>
    <name type="ordered locus">JTY_0042</name>
</gene>